<reference evidence="8" key="1">
    <citation type="journal article" date="2005" name="Proc. Natl. Acad. Sci. U.S.A.">
        <title>Comparison of the complete genome sequences of Pseudomonas syringae pv. syringae B728a and pv. tomato DC3000.</title>
        <authorList>
            <person name="Feil H."/>
            <person name="Feil W.S."/>
            <person name="Chain P."/>
            <person name="Larimer F."/>
            <person name="Dibartolo G."/>
            <person name="Copeland A."/>
            <person name="Lykidis A."/>
            <person name="Trong S."/>
            <person name="Nolan M."/>
            <person name="Goltsman E."/>
            <person name="Thiel J."/>
            <person name="Malfatti S."/>
            <person name="Loper J.E."/>
            <person name="Lapidus A."/>
            <person name="Detter J.C."/>
            <person name="Land M."/>
            <person name="Richardson P.M."/>
            <person name="Kyrpides N.C."/>
            <person name="Ivanova N."/>
            <person name="Lindow S.E."/>
        </authorList>
    </citation>
    <scope>NUCLEOTIDE SEQUENCE [LARGE SCALE GENOMIC DNA]</scope>
    <source>
        <strain evidence="8">B728a</strain>
    </source>
</reference>
<reference evidence="6" key="2">
    <citation type="journal article" date="2010" name="Biochem. Biophys. Res. Commun.">
        <title>Isolation and characterisation of EfeM, a periplasmic component of the putative EfeUOBM iron transporter of Pseudomonas syringae pv. syringae.</title>
        <authorList>
            <person name="Rajasekaran M.B."/>
            <person name="Mitchell S.A."/>
            <person name="Gibson T.M."/>
            <person name="Hussain R."/>
            <person name="Siligardi G."/>
            <person name="Andrews S.C."/>
            <person name="Watson K.A."/>
        </authorList>
    </citation>
    <scope>SUBCELLULAR LOCATION</scope>
    <scope>MASS SPECTROMETRY</scope>
</reference>
<reference evidence="9" key="3">
    <citation type="journal article" date="2022" name="BioMetals">
        <title>Crystal structure and metal binding properties of the periplasmic iron component EfeM from Pseudomonas syringae EfeUOB/M iron-transport system.</title>
        <authorList>
            <person name="Rajasekaran M.B."/>
            <person name="Hussain R."/>
            <person name="Siligardi G."/>
            <person name="Andrews S.C."/>
            <person name="Watson K.A."/>
        </authorList>
    </citation>
    <scope>X-RAY CRYSTALLOGRAPHY (1.60 ANGSTROMS)</scope>
    <scope>FUNCTION</scope>
    <scope>DOMAIN</scope>
</reference>
<proteinExistence type="evidence at protein level"/>
<gene>
    <name evidence="5" type="primary">efeM</name>
    <name evidence="7" type="ordered locus">Psyr_3370</name>
</gene>
<comment type="function">
    <text evidence="4">Part of the iron transporter system efeUOB/M involved in iron import. Specifically binds Fe(3+), which is produced by EfeB-mediated oxidation of Fe(2+), and delivers it to the cell inner membrane permease EfeU (PubMed:35348940). Also binds Zn(2+) and Cu(2+) in vitro (PubMed:35348940).</text>
</comment>
<comment type="subunit">
    <text evidence="1">Component of the iron transporter efeUOB/M complex composed of EfeU, EfeM and EfeB.</text>
</comment>
<comment type="subcellular location">
    <subcellularLocation>
        <location evidence="3">Periplasm</location>
    </subcellularLocation>
</comment>
<comment type="domain">
    <text evidence="4">The peptidase M75 domain contains 2 metal binding sites, site III and site IV (PubMed:35348940). Lacks the N-terminal Cup-like domain present in EfeO proteins that contains metal binding sites I and II (PubMed:35348940).</text>
</comment>
<comment type="mass spectrometry" mass="27772.05" method="Electrospray" evidence="3">
    <text>When expressed in E.coli Tuner (DE3).</text>
</comment>
<comment type="similarity">
    <text evidence="6">Belongs to the EfeM/EfeO family.</text>
</comment>
<feature type="signal peptide" evidence="2">
    <location>
        <begin position="1"/>
        <end position="34"/>
    </location>
</feature>
<feature type="chain" id="PRO_5004247975" description="Iron uptake system component EfeM" evidence="2">
    <location>
        <begin position="35"/>
        <end position="285"/>
    </location>
</feature>
<feature type="helix" evidence="10">
    <location>
        <begin position="38"/>
        <end position="41"/>
    </location>
</feature>
<feature type="helix" evidence="10">
    <location>
        <begin position="42"/>
        <end position="71"/>
    </location>
</feature>
<feature type="helix" evidence="10">
    <location>
        <begin position="75"/>
        <end position="90"/>
    </location>
</feature>
<feature type="helix" evidence="10">
    <location>
        <begin position="93"/>
        <end position="96"/>
    </location>
</feature>
<feature type="helix" evidence="10">
    <location>
        <begin position="100"/>
        <end position="107"/>
    </location>
</feature>
<feature type="helix" evidence="10">
    <location>
        <begin position="110"/>
        <end position="112"/>
    </location>
</feature>
<feature type="helix" evidence="10">
    <location>
        <begin position="116"/>
        <end position="118"/>
    </location>
</feature>
<feature type="helix" evidence="10">
    <location>
        <begin position="124"/>
        <end position="133"/>
    </location>
</feature>
<feature type="helix" evidence="10">
    <location>
        <begin position="142"/>
        <end position="161"/>
    </location>
</feature>
<feature type="helix" evidence="10">
    <location>
        <begin position="166"/>
        <end position="183"/>
    </location>
</feature>
<feature type="turn" evidence="10">
    <location>
        <begin position="184"/>
        <end position="187"/>
    </location>
</feature>
<feature type="turn" evidence="10">
    <location>
        <begin position="191"/>
        <end position="193"/>
    </location>
</feature>
<feature type="helix" evidence="10">
    <location>
        <begin position="196"/>
        <end position="213"/>
    </location>
</feature>
<feature type="helix" evidence="10">
    <location>
        <begin position="215"/>
        <end position="221"/>
    </location>
</feature>
<feature type="helix" evidence="10">
    <location>
        <begin position="225"/>
        <end position="241"/>
    </location>
</feature>
<feature type="helix" evidence="10">
    <location>
        <begin position="253"/>
        <end position="255"/>
    </location>
</feature>
<feature type="helix" evidence="10">
    <location>
        <begin position="258"/>
        <end position="275"/>
    </location>
</feature>
<feature type="helix" evidence="10">
    <location>
        <begin position="278"/>
        <end position="281"/>
    </location>
</feature>
<evidence type="ECO:0000250" key="1">
    <source>
        <dbReference type="UniProtKB" id="P39596"/>
    </source>
</evidence>
<evidence type="ECO:0000255" key="2"/>
<evidence type="ECO:0000269" key="3">
    <source>
    </source>
</evidence>
<evidence type="ECO:0000269" key="4">
    <source>
    </source>
</evidence>
<evidence type="ECO:0000303" key="5">
    <source>
    </source>
</evidence>
<evidence type="ECO:0000305" key="6"/>
<evidence type="ECO:0000312" key="7">
    <source>
        <dbReference type="EMBL" id="AAY38402.1"/>
    </source>
</evidence>
<evidence type="ECO:0000312" key="8">
    <source>
        <dbReference type="Proteomes" id="UP000000426"/>
    </source>
</evidence>
<evidence type="ECO:0007744" key="9">
    <source>
        <dbReference type="PDB" id="7Q1G"/>
    </source>
</evidence>
<evidence type="ECO:0007829" key="10">
    <source>
        <dbReference type="PDB" id="7Q1G"/>
    </source>
</evidence>
<dbReference type="EMBL" id="CP000075">
    <property type="protein sequence ID" value="AAY38402.1"/>
    <property type="molecule type" value="Genomic_DNA"/>
</dbReference>
<dbReference type="RefSeq" id="YP_236440.1">
    <property type="nucleotide sequence ID" value="NC_007005.1"/>
</dbReference>
<dbReference type="PDB" id="7Q1G">
    <property type="method" value="X-ray"/>
    <property type="resolution" value="1.60 A"/>
    <property type="chains" value="A/B=1-285"/>
</dbReference>
<dbReference type="PDBsum" id="7Q1G"/>
<dbReference type="SMR" id="Q4ZR20"/>
<dbReference type="STRING" id="205918.Psyr_3370"/>
<dbReference type="KEGG" id="psb:Psyr_3370"/>
<dbReference type="PATRIC" id="fig|205918.7.peg.3451"/>
<dbReference type="eggNOG" id="COG2822">
    <property type="taxonomic scope" value="Bacteria"/>
</dbReference>
<dbReference type="HOGENOM" id="CLU_050342_0_1_6"/>
<dbReference type="OrthoDB" id="7348379at2"/>
<dbReference type="Proteomes" id="UP000000426">
    <property type="component" value="Chromosome"/>
</dbReference>
<dbReference type="GO" id="GO:0042597">
    <property type="term" value="C:periplasmic space"/>
    <property type="evidence" value="ECO:0007669"/>
    <property type="project" value="UniProtKB-SubCell"/>
</dbReference>
<dbReference type="GO" id="GO:0046872">
    <property type="term" value="F:metal ion binding"/>
    <property type="evidence" value="ECO:0007669"/>
    <property type="project" value="UniProtKB-KW"/>
</dbReference>
<dbReference type="GO" id="GO:0006826">
    <property type="term" value="P:iron ion transport"/>
    <property type="evidence" value="ECO:0007669"/>
    <property type="project" value="UniProtKB-KW"/>
</dbReference>
<dbReference type="CDD" id="cd14656">
    <property type="entry name" value="Imelysin-like_EfeO"/>
    <property type="match status" value="1"/>
</dbReference>
<dbReference type="Gene3D" id="1.20.1420.20">
    <property type="entry name" value="M75 peptidase, HXXE motif"/>
    <property type="match status" value="1"/>
</dbReference>
<dbReference type="InterPro" id="IPR050894">
    <property type="entry name" value="EfeM/EfeO_iron_uptake"/>
</dbReference>
<dbReference type="InterPro" id="IPR018976">
    <property type="entry name" value="Imelysin-like"/>
</dbReference>
<dbReference type="InterPro" id="IPR034981">
    <property type="entry name" value="Imelysin-like_EfeO/Algp7"/>
</dbReference>
<dbReference type="InterPro" id="IPR038352">
    <property type="entry name" value="Imelysin_sf"/>
</dbReference>
<dbReference type="InterPro" id="IPR053377">
    <property type="entry name" value="Iron_uptake_EfeM/EfeO"/>
</dbReference>
<dbReference type="NCBIfam" id="NF041757">
    <property type="entry name" value="EfeO"/>
    <property type="match status" value="1"/>
</dbReference>
<dbReference type="NCBIfam" id="NF007697">
    <property type="entry name" value="PRK10378.1"/>
    <property type="match status" value="1"/>
</dbReference>
<dbReference type="PANTHER" id="PTHR39192">
    <property type="entry name" value="IRON UPTAKE SYSTEM COMPONENT EFEO"/>
    <property type="match status" value="1"/>
</dbReference>
<dbReference type="PANTHER" id="PTHR39192:SF1">
    <property type="entry name" value="IRON UPTAKE SYSTEM COMPONENT EFEO"/>
    <property type="match status" value="1"/>
</dbReference>
<dbReference type="Pfam" id="PF09375">
    <property type="entry name" value="Peptidase_M75"/>
    <property type="match status" value="1"/>
</dbReference>
<organism evidence="8">
    <name type="scientific">Pseudomonas syringae pv. syringae (strain B728a)</name>
    <dbReference type="NCBI Taxonomy" id="205918"/>
    <lineage>
        <taxon>Bacteria</taxon>
        <taxon>Pseudomonadati</taxon>
        <taxon>Pseudomonadota</taxon>
        <taxon>Gammaproteobacteria</taxon>
        <taxon>Pseudomonadales</taxon>
        <taxon>Pseudomonadaceae</taxon>
        <taxon>Pseudomonas</taxon>
        <taxon>Pseudomonas syringae</taxon>
    </lineage>
</organism>
<name>EFEM_PSEU2</name>
<accession>Q4ZR20</accession>
<protein>
    <recommendedName>
        <fullName evidence="6">Iron uptake system component EfeM</fullName>
    </recommendedName>
</protein>
<keyword id="KW-0002">3D-structure</keyword>
<keyword id="KW-0406">Ion transport</keyword>
<keyword id="KW-0408">Iron</keyword>
<keyword id="KW-0410">Iron transport</keyword>
<keyword id="KW-0479">Metal-binding</keyword>
<keyword id="KW-0574">Periplasm</keyword>
<keyword id="KW-0732">Signal</keyword>
<keyword id="KW-0813">Transport</keyword>
<sequence length="285" mass="31498">MTYPLLTRKTLMKKTPLALLLTLGLLQTPLAAFAATAPLDLVGPVSDYKIYVTENIEELVSHTQKFTDAVKKGDIATAKKLYAPTRVYYESVEPIAELFSDLDASIDSRVDDHEQGVAAEDFTGFHRLEYALFSQNTTKDQGPIADKLLSDVKDLEKRVADLTFPPEKVVGGAAALLEEVAATKISGEEDRYSHTDLYDFQGNIDGAKKIVDLFRPQIEQQDKAFSSKVDKNFATVDKILAKYKTKDGGFETYDKVKENDRKALVGPVNTLAEDLSTLRGKLGLN</sequence>